<keyword id="KW-0067">ATP-binding</keyword>
<keyword id="KW-0436">Ligase</keyword>
<keyword id="KW-0547">Nucleotide-binding</keyword>
<keyword id="KW-0648">Protein biosynthesis</keyword>
<feature type="chain" id="PRO_1000025483" description="Glutamyl-tRNA(Gln) amidotransferase subunit E">
    <location>
        <begin position="1"/>
        <end position="608"/>
    </location>
</feature>
<feature type="region of interest" description="Disordered" evidence="2">
    <location>
        <begin position="401"/>
        <end position="428"/>
    </location>
</feature>
<gene>
    <name evidence="1" type="primary">gatE</name>
    <name type="ordered locus">Pars_1379</name>
</gene>
<organism>
    <name type="scientific">Pyrobaculum arsenaticum (strain DSM 13514 / JCM 11321 / PZ6)</name>
    <dbReference type="NCBI Taxonomy" id="340102"/>
    <lineage>
        <taxon>Archaea</taxon>
        <taxon>Thermoproteota</taxon>
        <taxon>Thermoprotei</taxon>
        <taxon>Thermoproteales</taxon>
        <taxon>Thermoproteaceae</taxon>
        <taxon>Pyrobaculum</taxon>
    </lineage>
</organism>
<dbReference type="EC" id="6.3.5.-" evidence="1"/>
<dbReference type="EMBL" id="CP000660">
    <property type="protein sequence ID" value="ABP50941.1"/>
    <property type="molecule type" value="Genomic_DNA"/>
</dbReference>
<dbReference type="SMR" id="A4WKM4"/>
<dbReference type="STRING" id="340102.Pars_1379"/>
<dbReference type="KEGG" id="pas:Pars_1379"/>
<dbReference type="HOGENOM" id="CLU_030702_0_0_2"/>
<dbReference type="OrthoDB" id="7316at2157"/>
<dbReference type="PhylomeDB" id="A4WKM4"/>
<dbReference type="Proteomes" id="UP000001567">
    <property type="component" value="Chromosome"/>
</dbReference>
<dbReference type="GO" id="GO:0005737">
    <property type="term" value="C:cytoplasm"/>
    <property type="evidence" value="ECO:0007669"/>
    <property type="project" value="InterPro"/>
</dbReference>
<dbReference type="GO" id="GO:0004812">
    <property type="term" value="F:aminoacyl-tRNA ligase activity"/>
    <property type="evidence" value="ECO:0007669"/>
    <property type="project" value="InterPro"/>
</dbReference>
<dbReference type="GO" id="GO:0005524">
    <property type="term" value="F:ATP binding"/>
    <property type="evidence" value="ECO:0007669"/>
    <property type="project" value="UniProtKB-KW"/>
</dbReference>
<dbReference type="GO" id="GO:0050567">
    <property type="term" value="F:glutaminyl-tRNA synthase (glutamine-hydrolyzing) activity"/>
    <property type="evidence" value="ECO:0007669"/>
    <property type="project" value="UniProtKB-UniRule"/>
</dbReference>
<dbReference type="GO" id="GO:0070681">
    <property type="term" value="P:glutaminyl-tRNAGln biosynthesis via transamidation"/>
    <property type="evidence" value="ECO:0007669"/>
    <property type="project" value="TreeGrafter"/>
</dbReference>
<dbReference type="GO" id="GO:0006412">
    <property type="term" value="P:translation"/>
    <property type="evidence" value="ECO:0007669"/>
    <property type="project" value="UniProtKB-UniRule"/>
</dbReference>
<dbReference type="Gene3D" id="3.30.1360.30">
    <property type="entry name" value="GAD-like domain"/>
    <property type="match status" value="1"/>
</dbReference>
<dbReference type="Gene3D" id="1.10.150.380">
    <property type="entry name" value="GatB domain, N-terminal subdomain"/>
    <property type="match status" value="1"/>
</dbReference>
<dbReference type="HAMAP" id="MF_00588">
    <property type="entry name" value="GatE"/>
    <property type="match status" value="1"/>
</dbReference>
<dbReference type="InterPro" id="IPR017959">
    <property type="entry name" value="Asn/Gln-tRNA_amidoTrfase_suB/E"/>
</dbReference>
<dbReference type="InterPro" id="IPR006075">
    <property type="entry name" value="Asn/Gln-tRNA_Trfase_suB/E_cat"/>
</dbReference>
<dbReference type="InterPro" id="IPR018027">
    <property type="entry name" value="Asn/Gln_amidotransferase"/>
</dbReference>
<dbReference type="InterPro" id="IPR003789">
    <property type="entry name" value="Asn/Gln_tRNA_amidoTrase-B-like"/>
</dbReference>
<dbReference type="InterPro" id="IPR004115">
    <property type="entry name" value="GAD-like_sf"/>
</dbReference>
<dbReference type="InterPro" id="IPR029351">
    <property type="entry name" value="GAD_dom"/>
</dbReference>
<dbReference type="InterPro" id="IPR042114">
    <property type="entry name" value="GatB_C_1"/>
</dbReference>
<dbReference type="InterPro" id="IPR004414">
    <property type="entry name" value="GatE"/>
</dbReference>
<dbReference type="InterPro" id="IPR017958">
    <property type="entry name" value="Gln-tRNA_amidoTrfase_suB_CS"/>
</dbReference>
<dbReference type="InterPro" id="IPR014746">
    <property type="entry name" value="Gln_synth/guanido_kin_cat_dom"/>
</dbReference>
<dbReference type="NCBIfam" id="TIGR00134">
    <property type="entry name" value="gatE_arch"/>
    <property type="match status" value="1"/>
</dbReference>
<dbReference type="NCBIfam" id="NF003107">
    <property type="entry name" value="PRK04028.1"/>
    <property type="match status" value="1"/>
</dbReference>
<dbReference type="PANTHER" id="PTHR11659">
    <property type="entry name" value="GLUTAMYL-TRNA GLN AMIDOTRANSFERASE SUBUNIT B MITOCHONDRIAL AND PROKARYOTIC PET112-RELATED"/>
    <property type="match status" value="1"/>
</dbReference>
<dbReference type="PANTHER" id="PTHR11659:SF2">
    <property type="entry name" value="GLUTAMYL-TRNA(GLN) AMIDOTRANSFERASE SUBUNIT E"/>
    <property type="match status" value="1"/>
</dbReference>
<dbReference type="Pfam" id="PF02938">
    <property type="entry name" value="GAD"/>
    <property type="match status" value="1"/>
</dbReference>
<dbReference type="Pfam" id="PF02934">
    <property type="entry name" value="GatB_N"/>
    <property type="match status" value="1"/>
</dbReference>
<dbReference type="Pfam" id="PF02637">
    <property type="entry name" value="GatB_Yqey"/>
    <property type="match status" value="1"/>
</dbReference>
<dbReference type="SMART" id="SM00845">
    <property type="entry name" value="GatB_Yqey"/>
    <property type="match status" value="1"/>
</dbReference>
<dbReference type="SUPFAM" id="SSF55261">
    <property type="entry name" value="GAD domain-like"/>
    <property type="match status" value="1"/>
</dbReference>
<dbReference type="SUPFAM" id="SSF89095">
    <property type="entry name" value="GatB/YqeY motif"/>
    <property type="match status" value="1"/>
</dbReference>
<dbReference type="SUPFAM" id="SSF55931">
    <property type="entry name" value="Glutamine synthetase/guanido kinase"/>
    <property type="match status" value="1"/>
</dbReference>
<dbReference type="PROSITE" id="PS01234">
    <property type="entry name" value="GATB"/>
    <property type="match status" value="1"/>
</dbReference>
<comment type="function">
    <text evidence="1">Allows the formation of correctly charged Gln-tRNA(Gln) through the transamidation of misacylated Glu-tRNA(Gln) in organisms which lack glutaminyl-tRNA synthetase. The reaction takes place in the presence of glutamine and ATP through an activated gamma-phospho-Glu-tRNA(Gln). The GatDE system is specific for glutamate and does not act on aspartate.</text>
</comment>
<comment type="catalytic activity">
    <reaction evidence="1">
        <text>L-glutamyl-tRNA(Gln) + L-glutamine + ATP + H2O = L-glutaminyl-tRNA(Gln) + L-glutamate + ADP + phosphate + H(+)</text>
        <dbReference type="Rhea" id="RHEA:17521"/>
        <dbReference type="Rhea" id="RHEA-COMP:9681"/>
        <dbReference type="Rhea" id="RHEA-COMP:9684"/>
        <dbReference type="ChEBI" id="CHEBI:15377"/>
        <dbReference type="ChEBI" id="CHEBI:15378"/>
        <dbReference type="ChEBI" id="CHEBI:29985"/>
        <dbReference type="ChEBI" id="CHEBI:30616"/>
        <dbReference type="ChEBI" id="CHEBI:43474"/>
        <dbReference type="ChEBI" id="CHEBI:58359"/>
        <dbReference type="ChEBI" id="CHEBI:78520"/>
        <dbReference type="ChEBI" id="CHEBI:78521"/>
        <dbReference type="ChEBI" id="CHEBI:456216"/>
    </reaction>
</comment>
<comment type="subunit">
    <text evidence="1">Heterodimer of GatD and GatE.</text>
</comment>
<comment type="similarity">
    <text evidence="1">Belongs to the GatB/GatE family. GatE subfamily.</text>
</comment>
<reference key="1">
    <citation type="submission" date="2007-04" db="EMBL/GenBank/DDBJ databases">
        <title>Complete sequence of Pyrobaculum arsenaticum DSM 13514.</title>
        <authorList>
            <consortium name="US DOE Joint Genome Institute"/>
            <person name="Copeland A."/>
            <person name="Lucas S."/>
            <person name="Lapidus A."/>
            <person name="Barry K."/>
            <person name="Glavina del Rio T."/>
            <person name="Dalin E."/>
            <person name="Tice H."/>
            <person name="Pitluck S."/>
            <person name="Chain P."/>
            <person name="Malfatti S."/>
            <person name="Shin M."/>
            <person name="Vergez L."/>
            <person name="Schmutz J."/>
            <person name="Larimer F."/>
            <person name="Land M."/>
            <person name="Hauser L."/>
            <person name="Kyrpides N."/>
            <person name="Mikhailova N."/>
            <person name="Cozen A.E."/>
            <person name="Fitz-Gibbon S.T."/>
            <person name="House C.H."/>
            <person name="Saltikov C."/>
            <person name="Lowe T.M."/>
            <person name="Richardson P."/>
        </authorList>
    </citation>
    <scope>NUCLEOTIDE SEQUENCE [LARGE SCALE GENOMIC DNA]</scope>
    <source>
        <strain>ATCC 700994 / DSM 13514 / JCM 11321 / PZ6</strain>
    </source>
</reference>
<proteinExistence type="inferred from homology"/>
<evidence type="ECO:0000255" key="1">
    <source>
        <dbReference type="HAMAP-Rule" id="MF_00588"/>
    </source>
</evidence>
<evidence type="ECO:0000256" key="2">
    <source>
        <dbReference type="SAM" id="MobiDB-lite"/>
    </source>
</evidence>
<name>GATE_PYRAR</name>
<sequence>MDYKALGLKTGLEIHIQLNTRRKLFCHCPPVLRDDEPHFRVERRLHISVSELGAVDPAVVWEVRKRRKYIYEGYRDTTCLVELDEEPPHMPDEEALTTAVAVAKMFNAKLFDEIYVMRKTVVDGSNVSGFQRTMLVAYGGRAKILGYDIGVETIALEEDAARKMGEEGKAVVYRLDRLGIPLIEIATEPMTYAPQQVEEVAWIIGYSVKITGRAKRGVGTVRQDVNVSIAGGAKTEIKGVPDLSLIPKVIEYEATRQLSLLKIAEELKRRGVEKVELSLADVTQAFANTKSKLVRRVLDAGGKVVAVKAPGFNKLLGAEVQPGRRFGTELADYVRAWTELGGLLHSDELPGYGITADEVRDVEARVGVNSFILLMGVDEGELEEAARVVVERLNAAPRGVPEETRAANPDGTTRFLRPRPGAARMYPETDLPPVRITFEILKKAEEVAKVTLEGKLKELTSRGLSRDLALQLVKSPHLEKFEDYLQRFKEVPPQQIAAVLLNISKALAREGVEITDEKVESVLDALNRKVITKEAVEEVLRNMKPGESAEEAAKRLGLLRMSYDEVKKIVAEVAAQVGKEKAVGEVMRRYRGKVDVEDVRRALAEIYL</sequence>
<accession>A4WKM4</accession>
<protein>
    <recommendedName>
        <fullName evidence="1">Glutamyl-tRNA(Gln) amidotransferase subunit E</fullName>
        <shortName evidence="1">Glu-ADT subunit E</shortName>
        <ecNumber evidence="1">6.3.5.-</ecNumber>
    </recommendedName>
</protein>